<proteinExistence type="inferred from homology"/>
<accession>O29048</accession>
<gene>
    <name type="primary">prf1</name>
    <name type="ordered locus">AF_1220</name>
</gene>
<name>RF1_ARCFU</name>
<reference key="1">
    <citation type="journal article" date="1997" name="Nature">
        <title>The complete genome sequence of the hyperthermophilic, sulphate-reducing archaeon Archaeoglobus fulgidus.</title>
        <authorList>
            <person name="Klenk H.-P."/>
            <person name="Clayton R.A."/>
            <person name="Tomb J.-F."/>
            <person name="White O."/>
            <person name="Nelson K.E."/>
            <person name="Ketchum K.A."/>
            <person name="Dodson R.J."/>
            <person name="Gwinn M.L."/>
            <person name="Hickey E.K."/>
            <person name="Peterson J.D."/>
            <person name="Richardson D.L."/>
            <person name="Kerlavage A.R."/>
            <person name="Graham D.E."/>
            <person name="Kyrpides N.C."/>
            <person name="Fleischmann R.D."/>
            <person name="Quackenbush J."/>
            <person name="Lee N.H."/>
            <person name="Sutton G.G."/>
            <person name="Gill S.R."/>
            <person name="Kirkness E.F."/>
            <person name="Dougherty B.A."/>
            <person name="McKenney K."/>
            <person name="Adams M.D."/>
            <person name="Loftus B.J."/>
            <person name="Peterson S.N."/>
            <person name="Reich C.I."/>
            <person name="McNeil L.K."/>
            <person name="Badger J.H."/>
            <person name="Glodek A."/>
            <person name="Zhou L."/>
            <person name="Overbeek R."/>
            <person name="Gocayne J.D."/>
            <person name="Weidman J.F."/>
            <person name="McDonald L.A."/>
            <person name="Utterback T.R."/>
            <person name="Cotton M.D."/>
            <person name="Spriggs T."/>
            <person name="Artiach P."/>
            <person name="Kaine B.P."/>
            <person name="Sykes S.M."/>
            <person name="Sadow P.W."/>
            <person name="D'Andrea K.P."/>
            <person name="Bowman C."/>
            <person name="Fujii C."/>
            <person name="Garland S.A."/>
            <person name="Mason T.M."/>
            <person name="Olsen G.J."/>
            <person name="Fraser C.M."/>
            <person name="Smith H.O."/>
            <person name="Woese C.R."/>
            <person name="Venter J.C."/>
        </authorList>
    </citation>
    <scope>NUCLEOTIDE SEQUENCE [LARGE SCALE GENOMIC DNA]</scope>
    <source>
        <strain>ATCC 49558 / DSM 4304 / JCM 9628 / NBRC 100126 / VC-16</strain>
    </source>
</reference>
<feature type="chain" id="PRO_0000143169" description="Peptide chain release factor subunit 1">
    <location>
        <begin position="1"/>
        <end position="407"/>
    </location>
</feature>
<keyword id="KW-0963">Cytoplasm</keyword>
<keyword id="KW-0648">Protein biosynthesis</keyword>
<keyword id="KW-1185">Reference proteome</keyword>
<sequence length="407" mass="46671">MSQKMMYEFKRKLEELEKYKGRGTELITLYIPPDKNIADVSNQLRSELSQASNIKSKQTRTNVLAGIEAILNRLKHFRKPPENGMVIISGVVNINGKEKHITEIIEPPEPVPLYKYHCDSKFYLDPLKEMLTEKKLYGLIVLDRREATVGLLKGKRIEVLDWDTSMVPGKHRQGGQSSVRFERLREIAIHEFYKKVGEMASEALLPYKDKLIGILIGGPSPTKEEFYEGEYLHHELQKKVLGLFDVGYTDESGLYELVEKAKDVLQEVDIIREKNLMQRFLKEVARDGLAAYGEEEVRRYIELGAVDTLLLSEDLRYERVKYRCPKCGKEVEVTVREGIEKPPFCEEDNVEMEEVERRDIVLELSELAESTGAKVEFLSTESEEGEMLYKAFGGIAAILRFKPDGGQ</sequence>
<comment type="function">
    <text evidence="1">Directs the termination of nascent peptide synthesis (translation) in response to the termination codons UAA, UAG and UGA.</text>
</comment>
<comment type="subunit">
    <text evidence="1">Heterodimer of two subunits, one of which binds GTP.</text>
</comment>
<comment type="subcellular location">
    <subcellularLocation>
        <location evidence="2">Cytoplasm</location>
    </subcellularLocation>
</comment>
<comment type="similarity">
    <text evidence="2">Belongs to the eukaryotic release factor 1 family.</text>
</comment>
<protein>
    <recommendedName>
        <fullName>Peptide chain release factor subunit 1</fullName>
    </recommendedName>
    <alternativeName>
        <fullName>Translation termination factor aRF1</fullName>
    </alternativeName>
</protein>
<dbReference type="EMBL" id="AE000782">
    <property type="protein sequence ID" value="AAB90026.1"/>
    <property type="molecule type" value="Genomic_DNA"/>
</dbReference>
<dbReference type="PIR" id="C69402">
    <property type="entry name" value="C69402"/>
</dbReference>
<dbReference type="RefSeq" id="WP_010878715.1">
    <property type="nucleotide sequence ID" value="NC_000917.1"/>
</dbReference>
<dbReference type="SMR" id="O29048"/>
<dbReference type="STRING" id="224325.AF_1220"/>
<dbReference type="PaxDb" id="224325-AF_1220"/>
<dbReference type="EnsemblBacteria" id="AAB90026">
    <property type="protein sequence ID" value="AAB90026"/>
    <property type="gene ID" value="AF_1220"/>
</dbReference>
<dbReference type="GeneID" id="24794825"/>
<dbReference type="KEGG" id="afu:AF_1220"/>
<dbReference type="eggNOG" id="arCOG01742">
    <property type="taxonomic scope" value="Archaea"/>
</dbReference>
<dbReference type="HOGENOM" id="CLU_035759_3_0_2"/>
<dbReference type="OrthoDB" id="1011at2157"/>
<dbReference type="PhylomeDB" id="O29048"/>
<dbReference type="Proteomes" id="UP000002199">
    <property type="component" value="Chromosome"/>
</dbReference>
<dbReference type="GO" id="GO:0005737">
    <property type="term" value="C:cytoplasm"/>
    <property type="evidence" value="ECO:0007669"/>
    <property type="project" value="UniProtKB-SubCell"/>
</dbReference>
<dbReference type="GO" id="GO:0016149">
    <property type="term" value="F:translation release factor activity, codon specific"/>
    <property type="evidence" value="ECO:0007669"/>
    <property type="project" value="UniProtKB-UniRule"/>
</dbReference>
<dbReference type="FunFam" id="3.30.1330.30:FF:000032">
    <property type="entry name" value="Eukaryotic peptide chain release factor subunit 1"/>
    <property type="match status" value="1"/>
</dbReference>
<dbReference type="FunFam" id="3.30.420.60:FF:000003">
    <property type="entry name" value="Peptide chain release factor subunit 1"/>
    <property type="match status" value="1"/>
</dbReference>
<dbReference type="FunFam" id="3.30.960.10:FF:000003">
    <property type="entry name" value="Peptide chain release factor subunit 1"/>
    <property type="match status" value="1"/>
</dbReference>
<dbReference type="Gene3D" id="1.20.5.170">
    <property type="match status" value="1"/>
</dbReference>
<dbReference type="Gene3D" id="3.30.1330.30">
    <property type="match status" value="1"/>
</dbReference>
<dbReference type="Gene3D" id="3.30.960.10">
    <property type="entry name" value="eRF1 domain 1"/>
    <property type="match status" value="1"/>
</dbReference>
<dbReference type="Gene3D" id="3.30.420.60">
    <property type="entry name" value="eRF1 domain 2"/>
    <property type="match status" value="1"/>
</dbReference>
<dbReference type="HAMAP" id="MF_00424">
    <property type="entry name" value="Rel_fact_arch_1"/>
    <property type="match status" value="1"/>
</dbReference>
<dbReference type="InterPro" id="IPR042226">
    <property type="entry name" value="eFR1_2_sf"/>
</dbReference>
<dbReference type="InterPro" id="IPR005140">
    <property type="entry name" value="eRF1_1_Pelota"/>
</dbReference>
<dbReference type="InterPro" id="IPR024049">
    <property type="entry name" value="eRF1_1_sf"/>
</dbReference>
<dbReference type="InterPro" id="IPR005141">
    <property type="entry name" value="eRF1_2"/>
</dbReference>
<dbReference type="InterPro" id="IPR005142">
    <property type="entry name" value="eRF1_3"/>
</dbReference>
<dbReference type="InterPro" id="IPR020918">
    <property type="entry name" value="Peptide_chain-rel_aRF1"/>
</dbReference>
<dbReference type="InterPro" id="IPR004403">
    <property type="entry name" value="Peptide_chain-rel_eRF1/aRF1"/>
</dbReference>
<dbReference type="InterPro" id="IPR029064">
    <property type="entry name" value="Ribosomal_eL30-like_sf"/>
</dbReference>
<dbReference type="NCBIfam" id="TIGR03676">
    <property type="entry name" value="aRF1_eRF1"/>
    <property type="match status" value="1"/>
</dbReference>
<dbReference type="PANTHER" id="PTHR10113">
    <property type="entry name" value="PEPTIDE CHAIN RELEASE FACTOR SUBUNIT 1"/>
    <property type="match status" value="1"/>
</dbReference>
<dbReference type="Pfam" id="PF03463">
    <property type="entry name" value="eRF1_1"/>
    <property type="match status" value="1"/>
</dbReference>
<dbReference type="Pfam" id="PF03464">
    <property type="entry name" value="eRF1_2"/>
    <property type="match status" value="1"/>
</dbReference>
<dbReference type="Pfam" id="PF03465">
    <property type="entry name" value="eRF1_3"/>
    <property type="match status" value="1"/>
</dbReference>
<dbReference type="SMART" id="SM01194">
    <property type="entry name" value="eRF1_1"/>
    <property type="match status" value="1"/>
</dbReference>
<dbReference type="SUPFAM" id="SSF55315">
    <property type="entry name" value="L30e-like"/>
    <property type="match status" value="1"/>
</dbReference>
<dbReference type="SUPFAM" id="SSF55481">
    <property type="entry name" value="N-terminal domain of eukaryotic peptide chain release factor subunit 1, ERF1"/>
    <property type="match status" value="1"/>
</dbReference>
<dbReference type="SUPFAM" id="SSF53137">
    <property type="entry name" value="Translational machinery components"/>
    <property type="match status" value="1"/>
</dbReference>
<evidence type="ECO:0000250" key="1"/>
<evidence type="ECO:0000305" key="2"/>
<organism>
    <name type="scientific">Archaeoglobus fulgidus (strain ATCC 49558 / DSM 4304 / JCM 9628 / NBRC 100126 / VC-16)</name>
    <dbReference type="NCBI Taxonomy" id="224325"/>
    <lineage>
        <taxon>Archaea</taxon>
        <taxon>Methanobacteriati</taxon>
        <taxon>Methanobacteriota</taxon>
        <taxon>Archaeoglobi</taxon>
        <taxon>Archaeoglobales</taxon>
        <taxon>Archaeoglobaceae</taxon>
        <taxon>Archaeoglobus</taxon>
    </lineage>
</organism>